<organism>
    <name type="scientific">Vibrio atlanticus (strain LGP32)</name>
    <name type="common">Vibrio splendidus (strain Mel32)</name>
    <dbReference type="NCBI Taxonomy" id="575788"/>
    <lineage>
        <taxon>Bacteria</taxon>
        <taxon>Pseudomonadati</taxon>
        <taxon>Pseudomonadota</taxon>
        <taxon>Gammaproteobacteria</taxon>
        <taxon>Vibrionales</taxon>
        <taxon>Vibrionaceae</taxon>
        <taxon>Vibrio</taxon>
    </lineage>
</organism>
<comment type="function">
    <text evidence="1">Binds to the 23S rRNA.</text>
</comment>
<comment type="similarity">
    <text evidence="1">Belongs to the bacterial ribosomal protein bL9 family.</text>
</comment>
<reference key="1">
    <citation type="submission" date="2009-02" db="EMBL/GenBank/DDBJ databases">
        <title>Vibrio splendidus str. LGP32 complete genome.</title>
        <authorList>
            <person name="Mazel D."/>
            <person name="Le Roux F."/>
        </authorList>
    </citation>
    <scope>NUCLEOTIDE SEQUENCE [LARGE SCALE GENOMIC DNA]</scope>
    <source>
        <strain>LGP32</strain>
    </source>
</reference>
<keyword id="KW-0687">Ribonucleoprotein</keyword>
<keyword id="KW-0689">Ribosomal protein</keyword>
<keyword id="KW-0694">RNA-binding</keyword>
<keyword id="KW-0699">rRNA-binding</keyword>
<name>RL9_VIBA3</name>
<dbReference type="EMBL" id="FM954972">
    <property type="protein sequence ID" value="CAV17304.1"/>
    <property type="molecule type" value="Genomic_DNA"/>
</dbReference>
<dbReference type="SMR" id="B7VI67"/>
<dbReference type="STRING" id="575788.VS_0282"/>
<dbReference type="KEGG" id="vsp:VS_0282"/>
<dbReference type="eggNOG" id="COG0359">
    <property type="taxonomic scope" value="Bacteria"/>
</dbReference>
<dbReference type="HOGENOM" id="CLU_078938_4_1_6"/>
<dbReference type="Proteomes" id="UP000009100">
    <property type="component" value="Chromosome 1"/>
</dbReference>
<dbReference type="GO" id="GO:1990904">
    <property type="term" value="C:ribonucleoprotein complex"/>
    <property type="evidence" value="ECO:0007669"/>
    <property type="project" value="UniProtKB-KW"/>
</dbReference>
<dbReference type="GO" id="GO:0005840">
    <property type="term" value="C:ribosome"/>
    <property type="evidence" value="ECO:0007669"/>
    <property type="project" value="UniProtKB-KW"/>
</dbReference>
<dbReference type="GO" id="GO:0019843">
    <property type="term" value="F:rRNA binding"/>
    <property type="evidence" value="ECO:0007669"/>
    <property type="project" value="UniProtKB-UniRule"/>
</dbReference>
<dbReference type="GO" id="GO:0003735">
    <property type="term" value="F:structural constituent of ribosome"/>
    <property type="evidence" value="ECO:0007669"/>
    <property type="project" value="InterPro"/>
</dbReference>
<dbReference type="GO" id="GO:0006412">
    <property type="term" value="P:translation"/>
    <property type="evidence" value="ECO:0007669"/>
    <property type="project" value="UniProtKB-UniRule"/>
</dbReference>
<dbReference type="FunFam" id="3.10.430.100:FF:000001">
    <property type="entry name" value="50S ribosomal protein L9"/>
    <property type="match status" value="1"/>
</dbReference>
<dbReference type="FunFam" id="3.40.5.10:FF:000001">
    <property type="entry name" value="50S ribosomal protein L9"/>
    <property type="match status" value="1"/>
</dbReference>
<dbReference type="Gene3D" id="3.10.430.100">
    <property type="entry name" value="Ribosomal protein L9, C-terminal domain"/>
    <property type="match status" value="1"/>
</dbReference>
<dbReference type="Gene3D" id="3.40.5.10">
    <property type="entry name" value="Ribosomal protein L9, N-terminal domain"/>
    <property type="match status" value="1"/>
</dbReference>
<dbReference type="HAMAP" id="MF_00503">
    <property type="entry name" value="Ribosomal_bL9"/>
    <property type="match status" value="1"/>
</dbReference>
<dbReference type="InterPro" id="IPR000244">
    <property type="entry name" value="Ribosomal_bL9"/>
</dbReference>
<dbReference type="InterPro" id="IPR009027">
    <property type="entry name" value="Ribosomal_bL9/RNase_H1_N"/>
</dbReference>
<dbReference type="InterPro" id="IPR020594">
    <property type="entry name" value="Ribosomal_bL9_bac/chp"/>
</dbReference>
<dbReference type="InterPro" id="IPR020069">
    <property type="entry name" value="Ribosomal_bL9_C"/>
</dbReference>
<dbReference type="InterPro" id="IPR036791">
    <property type="entry name" value="Ribosomal_bL9_C_sf"/>
</dbReference>
<dbReference type="InterPro" id="IPR020070">
    <property type="entry name" value="Ribosomal_bL9_N"/>
</dbReference>
<dbReference type="InterPro" id="IPR036935">
    <property type="entry name" value="Ribosomal_bL9_N_sf"/>
</dbReference>
<dbReference type="NCBIfam" id="TIGR00158">
    <property type="entry name" value="L9"/>
    <property type="match status" value="1"/>
</dbReference>
<dbReference type="PANTHER" id="PTHR21368">
    <property type="entry name" value="50S RIBOSOMAL PROTEIN L9"/>
    <property type="match status" value="1"/>
</dbReference>
<dbReference type="Pfam" id="PF03948">
    <property type="entry name" value="Ribosomal_L9_C"/>
    <property type="match status" value="1"/>
</dbReference>
<dbReference type="Pfam" id="PF01281">
    <property type="entry name" value="Ribosomal_L9_N"/>
    <property type="match status" value="1"/>
</dbReference>
<dbReference type="SUPFAM" id="SSF55658">
    <property type="entry name" value="L9 N-domain-like"/>
    <property type="match status" value="1"/>
</dbReference>
<dbReference type="SUPFAM" id="SSF55653">
    <property type="entry name" value="Ribosomal protein L9 C-domain"/>
    <property type="match status" value="1"/>
</dbReference>
<dbReference type="PROSITE" id="PS00651">
    <property type="entry name" value="RIBOSOMAL_L9"/>
    <property type="match status" value="1"/>
</dbReference>
<feature type="chain" id="PRO_1000196275" description="Large ribosomal subunit protein bL9">
    <location>
        <begin position="1"/>
        <end position="150"/>
    </location>
</feature>
<proteinExistence type="inferred from homology"/>
<gene>
    <name evidence="1" type="primary">rplI</name>
    <name type="ordered locus">VS_0282</name>
</gene>
<protein>
    <recommendedName>
        <fullName evidence="1">Large ribosomal subunit protein bL9</fullName>
    </recommendedName>
    <alternativeName>
        <fullName evidence="2">50S ribosomal protein L9</fullName>
    </alternativeName>
</protein>
<evidence type="ECO:0000255" key="1">
    <source>
        <dbReference type="HAMAP-Rule" id="MF_00503"/>
    </source>
</evidence>
<evidence type="ECO:0000305" key="2"/>
<sequence length="150" mass="15683">MQVILLDKIGNLGGLGDQVNVKSGYARNFLIPQGKAVMATKDNVAMFETRRAELEAKVAEQLAASEARAESVNTLEGVTIASKAGDEGKLFGSIGTRDIADAITAAGVAVAKSEVRLPEGALRNIGEFEVSIQLHSEVFATAKIAIVAAE</sequence>
<accession>B7VI67</accession>